<organism>
    <name type="scientific">Buchnera aphidicola subsp. Acyrthosiphon pisum (strain APS)</name>
    <name type="common">Acyrthosiphon pisum symbiotic bacterium</name>
    <dbReference type="NCBI Taxonomy" id="107806"/>
    <lineage>
        <taxon>Bacteria</taxon>
        <taxon>Pseudomonadati</taxon>
        <taxon>Pseudomonadota</taxon>
        <taxon>Gammaproteobacteria</taxon>
        <taxon>Enterobacterales</taxon>
        <taxon>Erwiniaceae</taxon>
        <taxon>Buchnera</taxon>
    </lineage>
</organism>
<gene>
    <name evidence="1" type="primary">recB</name>
    <name type="ordered locus">BU454</name>
</gene>
<dbReference type="EC" id="3.1.11.5" evidence="1"/>
<dbReference type="EC" id="5.6.2.4" evidence="1"/>
<dbReference type="EMBL" id="BA000003">
    <property type="protein sequence ID" value="BAB13152.1"/>
    <property type="molecule type" value="Genomic_DNA"/>
</dbReference>
<dbReference type="RefSeq" id="NP_240266.1">
    <property type="nucleotide sequence ID" value="NC_002528.1"/>
</dbReference>
<dbReference type="RefSeq" id="WP_010896126.1">
    <property type="nucleotide sequence ID" value="NC_002528.1"/>
</dbReference>
<dbReference type="SMR" id="P57529"/>
<dbReference type="STRING" id="563178.BUAP5A_447"/>
<dbReference type="EnsemblBacteria" id="BAB13152">
    <property type="protein sequence ID" value="BAB13152"/>
    <property type="gene ID" value="BAB13152"/>
</dbReference>
<dbReference type="KEGG" id="buc:BU454"/>
<dbReference type="PATRIC" id="fig|107806.10.peg.464"/>
<dbReference type="eggNOG" id="COG1074">
    <property type="taxonomic scope" value="Bacteria"/>
</dbReference>
<dbReference type="HOGENOM" id="CLU_001114_6_0_6"/>
<dbReference type="Proteomes" id="UP000001806">
    <property type="component" value="Chromosome"/>
</dbReference>
<dbReference type="GO" id="GO:0005829">
    <property type="term" value="C:cytosol"/>
    <property type="evidence" value="ECO:0007669"/>
    <property type="project" value="TreeGrafter"/>
</dbReference>
<dbReference type="GO" id="GO:0009338">
    <property type="term" value="C:exodeoxyribonuclease V complex"/>
    <property type="evidence" value="ECO:0007669"/>
    <property type="project" value="TreeGrafter"/>
</dbReference>
<dbReference type="GO" id="GO:0043138">
    <property type="term" value="F:3'-5' DNA helicase activity"/>
    <property type="evidence" value="ECO:0007669"/>
    <property type="project" value="UniProtKB-UniRule"/>
</dbReference>
<dbReference type="GO" id="GO:0005524">
    <property type="term" value="F:ATP binding"/>
    <property type="evidence" value="ECO:0007669"/>
    <property type="project" value="UniProtKB-UniRule"/>
</dbReference>
<dbReference type="GO" id="GO:0016887">
    <property type="term" value="F:ATP hydrolysis activity"/>
    <property type="evidence" value="ECO:0007669"/>
    <property type="project" value="RHEA"/>
</dbReference>
<dbReference type="GO" id="GO:0003677">
    <property type="term" value="F:DNA binding"/>
    <property type="evidence" value="ECO:0007669"/>
    <property type="project" value="UniProtKB-UniRule"/>
</dbReference>
<dbReference type="GO" id="GO:0008854">
    <property type="term" value="F:exodeoxyribonuclease V activity"/>
    <property type="evidence" value="ECO:0007669"/>
    <property type="project" value="UniProtKB-EC"/>
</dbReference>
<dbReference type="GO" id="GO:0000287">
    <property type="term" value="F:magnesium ion binding"/>
    <property type="evidence" value="ECO:0007669"/>
    <property type="project" value="UniProtKB-UniRule"/>
</dbReference>
<dbReference type="GO" id="GO:0000724">
    <property type="term" value="P:double-strand break repair via homologous recombination"/>
    <property type="evidence" value="ECO:0007669"/>
    <property type="project" value="UniProtKB-UniRule"/>
</dbReference>
<dbReference type="CDD" id="cd22352">
    <property type="entry name" value="RecB_C-like"/>
    <property type="match status" value="1"/>
</dbReference>
<dbReference type="Gene3D" id="3.90.320.10">
    <property type="match status" value="1"/>
</dbReference>
<dbReference type="Gene3D" id="3.40.50.300">
    <property type="entry name" value="P-loop containing nucleotide triphosphate hydrolases"/>
    <property type="match status" value="2"/>
</dbReference>
<dbReference type="Gene3D" id="1.10.486.10">
    <property type="entry name" value="PCRA, domain 4"/>
    <property type="match status" value="1"/>
</dbReference>
<dbReference type="Gene3D" id="1.10.3170.10">
    <property type="entry name" value="Recbcd, chain B, domain 2"/>
    <property type="match status" value="1"/>
</dbReference>
<dbReference type="HAMAP" id="MF_01485">
    <property type="entry name" value="RecB"/>
    <property type="match status" value="1"/>
</dbReference>
<dbReference type="InterPro" id="IPR014017">
    <property type="entry name" value="DNA_helicase_UvrD-like_C"/>
</dbReference>
<dbReference type="InterPro" id="IPR000212">
    <property type="entry name" value="DNA_helicase_UvrD/REP"/>
</dbReference>
<dbReference type="InterPro" id="IPR027417">
    <property type="entry name" value="P-loop_NTPase"/>
</dbReference>
<dbReference type="InterPro" id="IPR011604">
    <property type="entry name" value="PDDEXK-like_dom_sf"/>
</dbReference>
<dbReference type="InterPro" id="IPR004586">
    <property type="entry name" value="RecB"/>
</dbReference>
<dbReference type="InterPro" id="IPR011335">
    <property type="entry name" value="Restrct_endonuc-II-like"/>
</dbReference>
<dbReference type="InterPro" id="IPR014016">
    <property type="entry name" value="UvrD-like_ATP-bd"/>
</dbReference>
<dbReference type="NCBIfam" id="TIGR00609">
    <property type="entry name" value="recB"/>
    <property type="match status" value="1"/>
</dbReference>
<dbReference type="PANTHER" id="PTHR11070:SF23">
    <property type="entry name" value="RECBCD ENZYME SUBUNIT RECB"/>
    <property type="match status" value="1"/>
</dbReference>
<dbReference type="PANTHER" id="PTHR11070">
    <property type="entry name" value="UVRD / RECB / PCRA DNA HELICASE FAMILY MEMBER"/>
    <property type="match status" value="1"/>
</dbReference>
<dbReference type="Pfam" id="PF00580">
    <property type="entry name" value="UvrD-helicase"/>
    <property type="match status" value="1"/>
</dbReference>
<dbReference type="Pfam" id="PF13361">
    <property type="entry name" value="UvrD_C"/>
    <property type="match status" value="1"/>
</dbReference>
<dbReference type="SUPFAM" id="SSF52540">
    <property type="entry name" value="P-loop containing nucleoside triphosphate hydrolases"/>
    <property type="match status" value="1"/>
</dbReference>
<dbReference type="SUPFAM" id="SSF52980">
    <property type="entry name" value="Restriction endonuclease-like"/>
    <property type="match status" value="1"/>
</dbReference>
<dbReference type="PROSITE" id="PS51198">
    <property type="entry name" value="UVRD_HELICASE_ATP_BIND"/>
    <property type="match status" value="1"/>
</dbReference>
<dbReference type="PROSITE" id="PS51217">
    <property type="entry name" value="UVRD_HELICASE_CTER"/>
    <property type="match status" value="1"/>
</dbReference>
<protein>
    <recommendedName>
        <fullName evidence="1">RecBCD enzyme subunit RecB</fullName>
        <ecNumber evidence="1">3.1.11.5</ecNumber>
        <ecNumber evidence="1">5.6.2.4</ecNumber>
    </recommendedName>
    <alternativeName>
        <fullName evidence="1">DNA 3'-5' helicase subunit RecB</fullName>
    </alternativeName>
    <alternativeName>
        <fullName evidence="1">Exonuclease V subunit RecB</fullName>
        <shortName evidence="1">ExoV subunit RecB</shortName>
    </alternativeName>
    <alternativeName>
        <fullName evidence="1">Helicase/nuclease RecBCD subunit RecB</fullName>
    </alternativeName>
</protein>
<feature type="chain" id="PRO_0000102040" description="RecBCD enzyme subunit RecB">
    <location>
        <begin position="1"/>
        <end position="1174"/>
    </location>
</feature>
<feature type="domain" description="UvrD-like helicase ATP-binding" evidence="1">
    <location>
        <begin position="4"/>
        <end position="449"/>
    </location>
</feature>
<feature type="domain" description="UvrD-like helicase C-terminal" evidence="1">
    <location>
        <begin position="479"/>
        <end position="745"/>
    </location>
</feature>
<feature type="region of interest" description="DNA-binding and helicase activity, interacts with RecC" evidence="1">
    <location>
        <begin position="1"/>
        <end position="852"/>
    </location>
</feature>
<feature type="region of interest" description="Nuclease activity, interacts with RecD and RecA" evidence="1">
    <location>
        <begin position="900"/>
        <end position="1174"/>
    </location>
</feature>
<feature type="active site" description="For nuclease activity" evidence="1">
    <location>
        <position position="1081"/>
    </location>
</feature>
<feature type="binding site" evidence="1">
    <location>
        <begin position="25"/>
        <end position="32"/>
    </location>
    <ligand>
        <name>ATP</name>
        <dbReference type="ChEBI" id="CHEBI:30616"/>
    </ligand>
</feature>
<feature type="binding site" evidence="1">
    <location>
        <position position="957"/>
    </location>
    <ligand>
        <name>Mg(2+)</name>
        <dbReference type="ChEBI" id="CHEBI:18420"/>
    </ligand>
</feature>
<feature type="binding site" evidence="1">
    <location>
        <position position="1068"/>
    </location>
    <ligand>
        <name>Mg(2+)</name>
        <dbReference type="ChEBI" id="CHEBI:18420"/>
    </ligand>
</feature>
<feature type="binding site" evidence="1">
    <location>
        <position position="1081"/>
    </location>
    <ligand>
        <name>Mg(2+)</name>
        <dbReference type="ChEBI" id="CHEBI:18420"/>
    </ligand>
</feature>
<comment type="function">
    <text evidence="1">A helicase/nuclease that prepares dsDNA breaks (DSB) for recombinational DNA repair. Binds to DSBs and unwinds DNA via a highly rapid and processive ATP-dependent bidirectional helicase activity. Unwinds dsDNA until it encounters a Chi (crossover hotspot instigator) sequence from the 3' direction. Cuts ssDNA a few nucleotides 3' to the Chi site. The properties and activities of the enzyme are changed at Chi. The Chi-altered holoenzyme produces a long 3'-ssDNA overhang and facilitates RecA-binding to the ssDNA for homologous DNA recombination and repair. Holoenzyme degrades any linearized DNA that is unable to undergo homologous recombination. In the holoenzyme this subunit contributes ATPase, 3'-5' helicase, exonuclease activity and loads RecA onto ssDNA.</text>
</comment>
<comment type="catalytic activity">
    <reaction evidence="1">
        <text>Exonucleolytic cleavage (in the presence of ATP) in either 5'- to 3'- or 3'- to 5'-direction to yield 5'-phosphooligonucleotides.</text>
        <dbReference type="EC" id="3.1.11.5"/>
    </reaction>
</comment>
<comment type="catalytic activity">
    <reaction evidence="1">
        <text>Couples ATP hydrolysis with the unwinding of duplex DNA by translocating in the 3'-5' direction.</text>
        <dbReference type="EC" id="5.6.2.4"/>
    </reaction>
</comment>
<comment type="catalytic activity">
    <reaction evidence="1">
        <text>ATP + H2O = ADP + phosphate + H(+)</text>
        <dbReference type="Rhea" id="RHEA:13065"/>
        <dbReference type="ChEBI" id="CHEBI:15377"/>
        <dbReference type="ChEBI" id="CHEBI:15378"/>
        <dbReference type="ChEBI" id="CHEBI:30616"/>
        <dbReference type="ChEBI" id="CHEBI:43474"/>
        <dbReference type="ChEBI" id="CHEBI:456216"/>
        <dbReference type="EC" id="5.6.2.4"/>
    </reaction>
</comment>
<comment type="cofactor">
    <cofactor evidence="1">
        <name>Mg(2+)</name>
        <dbReference type="ChEBI" id="CHEBI:18420"/>
    </cofactor>
    <text evidence="1">Binds 1 Mg(2+) ion per subunit.</text>
</comment>
<comment type="subunit">
    <text evidence="1">Heterotrimer of RecB, RecC and RecD. All subunits contribute to DNA-binding. Interacts with RecA.</text>
</comment>
<comment type="domain">
    <text evidence="1">The N-terminal DNA-binding domain is a ssDNA-dependent ATPase and has ATP-dependent 3'-5' helicase function. This domain interacts with RecC.</text>
</comment>
<comment type="domain">
    <text evidence="1">The C-terminal domain has nuclease activity and interacts with RecD. It interacts with RecA, facilitating its loading onto ssDNA.</text>
</comment>
<comment type="miscellaneous">
    <text evidence="1">In the RecBCD complex, RecB has a slow 3'-5' helicase, an exonuclease activity and loads RecA onto ssDNA, RecD has a fast 5'-3' helicase activity, while RecC stimulates the ATPase and processivity of the RecB helicase and contributes to recognition of the Chi site.</text>
</comment>
<comment type="similarity">
    <text evidence="1">Belongs to the helicase family. UvrD subfamily.</text>
</comment>
<proteinExistence type="inferred from homology"/>
<keyword id="KW-0067">ATP-binding</keyword>
<keyword id="KW-0227">DNA damage</keyword>
<keyword id="KW-0234">DNA repair</keyword>
<keyword id="KW-0238">DNA-binding</keyword>
<keyword id="KW-0269">Exonuclease</keyword>
<keyword id="KW-0347">Helicase</keyword>
<keyword id="KW-0378">Hydrolase</keyword>
<keyword id="KW-0413">Isomerase</keyword>
<keyword id="KW-0460">Magnesium</keyword>
<keyword id="KW-0479">Metal-binding</keyword>
<keyword id="KW-0540">Nuclease</keyword>
<keyword id="KW-0547">Nucleotide-binding</keyword>
<keyword id="KW-1185">Reference proteome</keyword>
<accession>P57529</accession>
<sequence length="1174" mass="139038">MKIDSLKEKLNIFKIPLNGIKLIEASAGTGKTFTIVLLYLRLLLGIGEKKIYKKKLLVHEILVVTFTNKAKEELYIRIKDGIQNMYLTCINKTTSDSSFQFFFKEIHDIKEAIYVLKRAQNDMNSSSIYTIHSFCQHILQLHTFHFNDIFEEKIIENEDNLYLQATQDFWRRFFYTLPEDIIKIIYQDYKSPDHLLKTIKPFFYIKSINFPTKILNNKKLIMYHEENIKKIIFFKEMWLIYHKIIQKTINDLEINKKIYSKFNLIKWINKITEWAKSETKDYTIPSILKYFTKKNIEKNTINNTCSKYIIFEESEKILKKKFSLKNVIIIYAVKKIHQFLLKEKKKKSLIGFNDLLSILLKTIKKEKFLKDLIIKKYPAAFIDEFQDTDIQQYKIFNLLYKKNKTTVLFLIGDPKQAIYSFRGADIFSYLYAKSKIKKYYYLDTNWRSSINICKSINFLFSQNINPFIFKNIPYIPVVPSSKNLKMNFTINDVAQTPISFFLQEEKEVSIDDYQVWISKQCANEISFWLTCAKTGKAKITTKNGEKILTANDIAILVRNRKEADLIQDELEKLNIISIYSSNKNSVFQTLDAQELLWILESILEPENEILLQQSMASHILKKLSLVVENKTISNKNSYFIIEKLYEYHDIWEKIGVFQMIKIMILEYQKNSFCTEINENHIKNLNFLHIGELLQEQFQFFHKKISLIRWFQKKISTKTQPEYNESIKCFDESPSIKIITIHKSKGLEYPIVWIPFSIDFKKSTLAIYHDQKSLKTFFDENYSNKFLKIADEERLAEDIRFLYVALTRSILHCSIGLACLIKKIIKNRNNSDIHQSGLGFTIQGGKTMNYEGLLEKLKKLSINNFIEVKNNTDNFSFSRKPQTISLICKNKFLNKKNIRNTWSITSFSQLNKINKLSKHHQKEVALKELCIKNQEKKNQSLLTIHNFPKGKKTGLMIHYILKNLHVLKNKNSNWFSCILEKYNIHIKWTSVLIYWIKNIINTPLNDEKIILSRIDEKSSIRELEFFFPIKNMLYSTELNKIIQSINPTSITSPQLSFNPVKGMLTGFVDLVFIWKKKYYILDYKSNWLGKNNNFYSSIHINKEIVKKRYHLQYQIYTIAIHKYLQKKLKNYNYKDDFGGVFYFFLRAIDCPKKNNGIFYTMPNYSLIKKTMTLIS</sequence>
<name>RECB_BUCAI</name>
<reference key="1">
    <citation type="journal article" date="2000" name="Nature">
        <title>Genome sequence of the endocellular bacterial symbiont of aphids Buchnera sp. APS.</title>
        <authorList>
            <person name="Shigenobu S."/>
            <person name="Watanabe H."/>
            <person name="Hattori M."/>
            <person name="Sakaki Y."/>
            <person name="Ishikawa H."/>
        </authorList>
    </citation>
    <scope>NUCLEOTIDE SEQUENCE [LARGE SCALE GENOMIC DNA]</scope>
    <source>
        <strain>APS</strain>
    </source>
</reference>
<evidence type="ECO:0000255" key="1">
    <source>
        <dbReference type="HAMAP-Rule" id="MF_01485"/>
    </source>
</evidence>